<keyword id="KW-0066">ATP synthesis</keyword>
<keyword id="KW-0997">Cell inner membrane</keyword>
<keyword id="KW-1003">Cell membrane</keyword>
<keyword id="KW-0139">CF(1)</keyword>
<keyword id="KW-0375">Hydrogen ion transport</keyword>
<keyword id="KW-0406">Ion transport</keyword>
<keyword id="KW-0472">Membrane</keyword>
<keyword id="KW-0813">Transport</keyword>
<dbReference type="EMBL" id="CP000671">
    <property type="protein sequence ID" value="ABQ97611.1"/>
    <property type="molecule type" value="Genomic_DNA"/>
</dbReference>
<dbReference type="SMR" id="A5UA10"/>
<dbReference type="KEGG" id="hip:CGSHiEE_00585"/>
<dbReference type="HOGENOM" id="CLU_050669_0_1_6"/>
<dbReference type="GO" id="GO:0005886">
    <property type="term" value="C:plasma membrane"/>
    <property type="evidence" value="ECO:0007669"/>
    <property type="project" value="UniProtKB-SubCell"/>
</dbReference>
<dbReference type="GO" id="GO:0045259">
    <property type="term" value="C:proton-transporting ATP synthase complex"/>
    <property type="evidence" value="ECO:0007669"/>
    <property type="project" value="UniProtKB-KW"/>
</dbReference>
<dbReference type="GO" id="GO:0005524">
    <property type="term" value="F:ATP binding"/>
    <property type="evidence" value="ECO:0007669"/>
    <property type="project" value="UniProtKB-UniRule"/>
</dbReference>
<dbReference type="GO" id="GO:0046933">
    <property type="term" value="F:proton-transporting ATP synthase activity, rotational mechanism"/>
    <property type="evidence" value="ECO:0007669"/>
    <property type="project" value="UniProtKB-UniRule"/>
</dbReference>
<dbReference type="GO" id="GO:0042777">
    <property type="term" value="P:proton motive force-driven plasma membrane ATP synthesis"/>
    <property type="evidence" value="ECO:0007669"/>
    <property type="project" value="UniProtKB-UniRule"/>
</dbReference>
<dbReference type="CDD" id="cd12151">
    <property type="entry name" value="F1-ATPase_gamma"/>
    <property type="match status" value="1"/>
</dbReference>
<dbReference type="FunFam" id="1.10.287.80:FF:000005">
    <property type="entry name" value="ATP synthase gamma chain"/>
    <property type="match status" value="1"/>
</dbReference>
<dbReference type="FunFam" id="3.40.1380.10:FF:000001">
    <property type="entry name" value="ATP synthase gamma chain"/>
    <property type="match status" value="1"/>
</dbReference>
<dbReference type="Gene3D" id="3.40.1380.10">
    <property type="match status" value="1"/>
</dbReference>
<dbReference type="Gene3D" id="1.10.287.80">
    <property type="entry name" value="ATP synthase, gamma subunit, helix hairpin domain"/>
    <property type="match status" value="1"/>
</dbReference>
<dbReference type="HAMAP" id="MF_00815">
    <property type="entry name" value="ATP_synth_gamma_bact"/>
    <property type="match status" value="1"/>
</dbReference>
<dbReference type="InterPro" id="IPR035968">
    <property type="entry name" value="ATP_synth_F1_ATPase_gsu"/>
</dbReference>
<dbReference type="InterPro" id="IPR000131">
    <property type="entry name" value="ATP_synth_F1_gsu"/>
</dbReference>
<dbReference type="InterPro" id="IPR023632">
    <property type="entry name" value="ATP_synth_F1_gsu_CS"/>
</dbReference>
<dbReference type="NCBIfam" id="TIGR01146">
    <property type="entry name" value="ATPsyn_F1gamma"/>
    <property type="match status" value="1"/>
</dbReference>
<dbReference type="NCBIfam" id="NF004144">
    <property type="entry name" value="PRK05621.1-1"/>
    <property type="match status" value="1"/>
</dbReference>
<dbReference type="PANTHER" id="PTHR11693">
    <property type="entry name" value="ATP SYNTHASE GAMMA CHAIN"/>
    <property type="match status" value="1"/>
</dbReference>
<dbReference type="PANTHER" id="PTHR11693:SF22">
    <property type="entry name" value="ATP SYNTHASE SUBUNIT GAMMA, MITOCHONDRIAL"/>
    <property type="match status" value="1"/>
</dbReference>
<dbReference type="Pfam" id="PF00231">
    <property type="entry name" value="ATP-synt"/>
    <property type="match status" value="1"/>
</dbReference>
<dbReference type="PRINTS" id="PR00126">
    <property type="entry name" value="ATPASEGAMMA"/>
</dbReference>
<dbReference type="SUPFAM" id="SSF52943">
    <property type="entry name" value="ATP synthase (F1-ATPase), gamma subunit"/>
    <property type="match status" value="1"/>
</dbReference>
<dbReference type="PROSITE" id="PS00153">
    <property type="entry name" value="ATPASE_GAMMA"/>
    <property type="match status" value="1"/>
</dbReference>
<sequence>MAGAKEIKTKIASVQSTQKITKAMEMVATSKMRKTQDRMAASRPYSETIRNVISHVSKASIGYKHPFLVEREVKKIGILVISTDRGMCGGLNVNLFKTTLNQIKNWKEQNISTDLGLIGSKGISFFRSFGFNIKGQLSGLGDTPALEELIGVANTMFDAYRNGEIDAIYIAYNKFVNTMSQKPVVQQLVPLPESKDDHLNERQQTWDYLYEPEPKALLDSLLVRYLESQIYQAVVDNVASEQAARMVAMKAATDNAGNLINDLRLVYNKARQASITNELNEIVAGAAAI</sequence>
<protein>
    <recommendedName>
        <fullName evidence="1">ATP synthase gamma chain</fullName>
    </recommendedName>
    <alternativeName>
        <fullName evidence="1">ATP synthase F1 sector gamma subunit</fullName>
    </alternativeName>
    <alternativeName>
        <fullName evidence="1">F-ATPase gamma subunit</fullName>
    </alternativeName>
</protein>
<reference key="1">
    <citation type="journal article" date="2007" name="Genome Biol.">
        <title>Characterization and modeling of the Haemophilus influenzae core and supragenomes based on the complete genomic sequences of Rd and 12 clinical nontypeable strains.</title>
        <authorList>
            <person name="Hogg J.S."/>
            <person name="Hu F.Z."/>
            <person name="Janto B."/>
            <person name="Boissy R."/>
            <person name="Hayes J."/>
            <person name="Keefe R."/>
            <person name="Post J.C."/>
            <person name="Ehrlich G.D."/>
        </authorList>
    </citation>
    <scope>NUCLEOTIDE SEQUENCE [LARGE SCALE GENOMIC DNA]</scope>
    <source>
        <strain>PittEE</strain>
    </source>
</reference>
<name>ATPG_HAEIE</name>
<organism>
    <name type="scientific">Haemophilus influenzae (strain PittEE)</name>
    <dbReference type="NCBI Taxonomy" id="374930"/>
    <lineage>
        <taxon>Bacteria</taxon>
        <taxon>Pseudomonadati</taxon>
        <taxon>Pseudomonadota</taxon>
        <taxon>Gammaproteobacteria</taxon>
        <taxon>Pasteurellales</taxon>
        <taxon>Pasteurellaceae</taxon>
        <taxon>Haemophilus</taxon>
    </lineage>
</organism>
<comment type="function">
    <text evidence="1">Produces ATP from ADP in the presence of a proton gradient across the membrane. The gamma chain is believed to be important in regulating ATPase activity and the flow of protons through the CF(0) complex.</text>
</comment>
<comment type="subunit">
    <text evidence="1">F-type ATPases have 2 components, CF(1) - the catalytic core - and CF(0) - the membrane proton channel. CF(1) has five subunits: alpha(3), beta(3), gamma(1), delta(1), epsilon(1). CF(0) has three main subunits: a, b and c.</text>
</comment>
<comment type="subcellular location">
    <subcellularLocation>
        <location evidence="1">Cell inner membrane</location>
        <topology evidence="1">Peripheral membrane protein</topology>
    </subcellularLocation>
</comment>
<comment type="similarity">
    <text evidence="1">Belongs to the ATPase gamma chain family.</text>
</comment>
<accession>A5UA10</accession>
<evidence type="ECO:0000255" key="1">
    <source>
        <dbReference type="HAMAP-Rule" id="MF_00815"/>
    </source>
</evidence>
<proteinExistence type="inferred from homology"/>
<gene>
    <name evidence="1" type="primary">atpG</name>
    <name type="ordered locus">CGSHiEE_00585</name>
</gene>
<feature type="chain" id="PRO_1000053221" description="ATP synthase gamma chain">
    <location>
        <begin position="1"/>
        <end position="289"/>
    </location>
</feature>